<sequence>MTLDLTLEDPRWTILPPLADRAISATLAQMGLDPELCEISLLGCDDARITALNAEFREKPSPTNVLSWPAEDLAAETPGGTPLAPEPDFTGAVPLGDIAIAFDTCQREADAAGKPIADHVTHLIVHGLLHLLGYDHIRDEDATLMEGLETRILGNLGIDDPYTME</sequence>
<comment type="function">
    <text evidence="1">Single strand-specific metallo-endoribonuclease involved in late-stage 70S ribosome quality control and in maturation of the 3' terminus of the 16S rRNA.</text>
</comment>
<comment type="cofactor">
    <cofactor evidence="1">
        <name>Zn(2+)</name>
        <dbReference type="ChEBI" id="CHEBI:29105"/>
    </cofactor>
    <text evidence="1">Binds 1 zinc ion.</text>
</comment>
<comment type="subcellular location">
    <subcellularLocation>
        <location evidence="1">Cytoplasm</location>
    </subcellularLocation>
</comment>
<comment type="similarity">
    <text evidence="1">Belongs to the endoribonuclease YbeY family.</text>
</comment>
<dbReference type="EC" id="3.1.-.-" evidence="1"/>
<dbReference type="EMBL" id="CP000032">
    <property type="protein sequence ID" value="AAV97149.1"/>
    <property type="molecule type" value="Genomic_DNA"/>
</dbReference>
<dbReference type="RefSeq" id="WP_011241793.1">
    <property type="nucleotide sequence ID" value="NC_006569.1"/>
</dbReference>
<dbReference type="SMR" id="Q5LLL4"/>
<dbReference type="PaxDb" id="246200-SPOA0008"/>
<dbReference type="KEGG" id="sil:SPOA0008"/>
<dbReference type="eggNOG" id="COG0319">
    <property type="taxonomic scope" value="Bacteria"/>
</dbReference>
<dbReference type="HOGENOM" id="CLU_106710_0_0_5"/>
<dbReference type="OrthoDB" id="9807740at2"/>
<dbReference type="Proteomes" id="UP000001023">
    <property type="component" value="Plasmid megaplasmid"/>
</dbReference>
<dbReference type="GO" id="GO:0005737">
    <property type="term" value="C:cytoplasm"/>
    <property type="evidence" value="ECO:0007669"/>
    <property type="project" value="UniProtKB-SubCell"/>
</dbReference>
<dbReference type="GO" id="GO:0004222">
    <property type="term" value="F:metalloendopeptidase activity"/>
    <property type="evidence" value="ECO:0007669"/>
    <property type="project" value="InterPro"/>
</dbReference>
<dbReference type="GO" id="GO:0004521">
    <property type="term" value="F:RNA endonuclease activity"/>
    <property type="evidence" value="ECO:0007669"/>
    <property type="project" value="UniProtKB-UniRule"/>
</dbReference>
<dbReference type="GO" id="GO:0008270">
    <property type="term" value="F:zinc ion binding"/>
    <property type="evidence" value="ECO:0007669"/>
    <property type="project" value="UniProtKB-UniRule"/>
</dbReference>
<dbReference type="GO" id="GO:0006364">
    <property type="term" value="P:rRNA processing"/>
    <property type="evidence" value="ECO:0007669"/>
    <property type="project" value="UniProtKB-UniRule"/>
</dbReference>
<dbReference type="Gene3D" id="3.40.390.30">
    <property type="entry name" value="Metalloproteases ('zincins'), catalytic domain"/>
    <property type="match status" value="1"/>
</dbReference>
<dbReference type="HAMAP" id="MF_00009">
    <property type="entry name" value="Endoribonucl_YbeY"/>
    <property type="match status" value="1"/>
</dbReference>
<dbReference type="InterPro" id="IPR023091">
    <property type="entry name" value="MetalPrtase_cat_dom_sf_prd"/>
</dbReference>
<dbReference type="InterPro" id="IPR002036">
    <property type="entry name" value="YbeY"/>
</dbReference>
<dbReference type="InterPro" id="IPR020549">
    <property type="entry name" value="YbeY_CS"/>
</dbReference>
<dbReference type="NCBIfam" id="TIGR00043">
    <property type="entry name" value="rRNA maturation RNase YbeY"/>
    <property type="match status" value="1"/>
</dbReference>
<dbReference type="PANTHER" id="PTHR46986">
    <property type="entry name" value="ENDORIBONUCLEASE YBEY, CHLOROPLASTIC"/>
    <property type="match status" value="1"/>
</dbReference>
<dbReference type="PANTHER" id="PTHR46986:SF1">
    <property type="entry name" value="ENDORIBONUCLEASE YBEY, CHLOROPLASTIC"/>
    <property type="match status" value="1"/>
</dbReference>
<dbReference type="Pfam" id="PF02130">
    <property type="entry name" value="YbeY"/>
    <property type="match status" value="1"/>
</dbReference>
<dbReference type="SUPFAM" id="SSF55486">
    <property type="entry name" value="Metalloproteases ('zincins'), catalytic domain"/>
    <property type="match status" value="1"/>
</dbReference>
<dbReference type="PROSITE" id="PS01306">
    <property type="entry name" value="UPF0054"/>
    <property type="match status" value="1"/>
</dbReference>
<keyword id="KW-0963">Cytoplasm</keyword>
<keyword id="KW-0255">Endonuclease</keyword>
<keyword id="KW-0378">Hydrolase</keyword>
<keyword id="KW-0479">Metal-binding</keyword>
<keyword id="KW-0540">Nuclease</keyword>
<keyword id="KW-0614">Plasmid</keyword>
<keyword id="KW-1185">Reference proteome</keyword>
<keyword id="KW-0690">Ribosome biogenesis</keyword>
<keyword id="KW-0698">rRNA processing</keyword>
<keyword id="KW-0862">Zinc</keyword>
<name>YBEY_RUEPO</name>
<accession>Q5LLL4</accession>
<reference key="1">
    <citation type="journal article" date="2004" name="Nature">
        <title>Genome sequence of Silicibacter pomeroyi reveals adaptations to the marine environment.</title>
        <authorList>
            <person name="Moran M.A."/>
            <person name="Buchan A."/>
            <person name="Gonzalez J.M."/>
            <person name="Heidelberg J.F."/>
            <person name="Whitman W.B."/>
            <person name="Kiene R.P."/>
            <person name="Henriksen J.R."/>
            <person name="King G.M."/>
            <person name="Belas R."/>
            <person name="Fuqua C."/>
            <person name="Brinkac L.M."/>
            <person name="Lewis M."/>
            <person name="Johri S."/>
            <person name="Weaver B."/>
            <person name="Pai G."/>
            <person name="Eisen J.A."/>
            <person name="Rahe E."/>
            <person name="Sheldon W.M."/>
            <person name="Ye W."/>
            <person name="Miller T.R."/>
            <person name="Carlton J."/>
            <person name="Rasko D.A."/>
            <person name="Paulsen I.T."/>
            <person name="Ren Q."/>
            <person name="Daugherty S.C."/>
            <person name="DeBoy R.T."/>
            <person name="Dodson R.J."/>
            <person name="Durkin A.S."/>
            <person name="Madupu R."/>
            <person name="Nelson W.C."/>
            <person name="Sullivan S.A."/>
            <person name="Rosovitz M.J."/>
            <person name="Haft D.H."/>
            <person name="Selengut J."/>
            <person name="Ward N."/>
        </authorList>
    </citation>
    <scope>NUCLEOTIDE SEQUENCE [LARGE SCALE GENOMIC DNA]</scope>
    <source>
        <strain>ATCC 700808 / DSM 15171 / DSS-3</strain>
    </source>
</reference>
<reference key="2">
    <citation type="journal article" date="2014" name="Stand. Genomic Sci.">
        <title>An updated genome annotation for the model marine bacterium Ruegeria pomeroyi DSS-3.</title>
        <authorList>
            <person name="Rivers A.R."/>
            <person name="Smith C.B."/>
            <person name="Moran M.A."/>
        </authorList>
    </citation>
    <scope>GENOME REANNOTATION</scope>
    <source>
        <strain>ATCC 700808 / DSM 15171 / DSS-3</strain>
    </source>
</reference>
<protein>
    <recommendedName>
        <fullName evidence="1">Endoribonuclease YbeY</fullName>
        <ecNumber evidence="1">3.1.-.-</ecNumber>
    </recommendedName>
</protein>
<geneLocation type="plasmid">
    <name>megaplasmid Spo</name>
</geneLocation>
<evidence type="ECO:0000255" key="1">
    <source>
        <dbReference type="HAMAP-Rule" id="MF_00009"/>
    </source>
</evidence>
<gene>
    <name evidence="1" type="primary">ybeY</name>
    <name type="ordered locus">SPOA0008</name>
</gene>
<feature type="chain" id="PRO_0000102526" description="Endoribonuclease YbeY">
    <location>
        <begin position="1"/>
        <end position="165"/>
    </location>
</feature>
<feature type="binding site" evidence="1">
    <location>
        <position position="126"/>
    </location>
    <ligand>
        <name>Zn(2+)</name>
        <dbReference type="ChEBI" id="CHEBI:29105"/>
        <note>catalytic</note>
    </ligand>
</feature>
<feature type="binding site" evidence="1">
    <location>
        <position position="130"/>
    </location>
    <ligand>
        <name>Zn(2+)</name>
        <dbReference type="ChEBI" id="CHEBI:29105"/>
        <note>catalytic</note>
    </ligand>
</feature>
<feature type="binding site" evidence="1">
    <location>
        <position position="136"/>
    </location>
    <ligand>
        <name>Zn(2+)</name>
        <dbReference type="ChEBI" id="CHEBI:29105"/>
        <note>catalytic</note>
    </ligand>
</feature>
<organism>
    <name type="scientific">Ruegeria pomeroyi (strain ATCC 700808 / DSM 15171 / DSS-3)</name>
    <name type="common">Silicibacter pomeroyi</name>
    <dbReference type="NCBI Taxonomy" id="246200"/>
    <lineage>
        <taxon>Bacteria</taxon>
        <taxon>Pseudomonadati</taxon>
        <taxon>Pseudomonadota</taxon>
        <taxon>Alphaproteobacteria</taxon>
        <taxon>Rhodobacterales</taxon>
        <taxon>Roseobacteraceae</taxon>
        <taxon>Ruegeria</taxon>
    </lineage>
</organism>
<proteinExistence type="inferred from homology"/>